<dbReference type="EMBL" id="S58166">
    <property type="protein sequence ID" value="AAB26094.1"/>
    <property type="molecule type" value="mRNA"/>
</dbReference>
<dbReference type="PIR" id="A48351">
    <property type="entry name" value="A48351"/>
</dbReference>
<dbReference type="SMR" id="P36357"/>
<dbReference type="GO" id="GO:0044166">
    <property type="term" value="C:host cell endoplasmic reticulum lumen"/>
    <property type="evidence" value="ECO:0007669"/>
    <property type="project" value="UniProtKB-SubCell"/>
</dbReference>
<dbReference type="GO" id="GO:0039621">
    <property type="term" value="C:T=13 icosahedral viral capsid"/>
    <property type="evidence" value="ECO:0007669"/>
    <property type="project" value="UniProtKB-UniRule"/>
</dbReference>
<dbReference type="GO" id="GO:0039624">
    <property type="term" value="C:viral outer capsid"/>
    <property type="evidence" value="ECO:0007669"/>
    <property type="project" value="UniProtKB-UniRule"/>
</dbReference>
<dbReference type="GO" id="GO:0046872">
    <property type="term" value="F:metal ion binding"/>
    <property type="evidence" value="ECO:0007669"/>
    <property type="project" value="UniProtKB-KW"/>
</dbReference>
<dbReference type="Gene3D" id="3.40.50.11130">
    <property type="entry name" value="Glycoprotein VP7, domain 1"/>
    <property type="match status" value="1"/>
</dbReference>
<dbReference type="Gene3D" id="2.60.120.800">
    <property type="entry name" value="Rotavirus outer-layer protein VP7, domain 2"/>
    <property type="match status" value="1"/>
</dbReference>
<dbReference type="HAMAP" id="MF_04130">
    <property type="entry name" value="Rota_VP7"/>
    <property type="match status" value="1"/>
</dbReference>
<dbReference type="HAMAP" id="MF_04131">
    <property type="entry name" value="Rota_VP7_A"/>
    <property type="match status" value="1"/>
</dbReference>
<dbReference type="InterPro" id="IPR001963">
    <property type="entry name" value="VP7"/>
</dbReference>
<dbReference type="InterPro" id="IPR042207">
    <property type="entry name" value="VP7_1"/>
</dbReference>
<dbReference type="InterPro" id="IPR042210">
    <property type="entry name" value="VP7_2"/>
</dbReference>
<dbReference type="Pfam" id="PF00434">
    <property type="entry name" value="VP7"/>
    <property type="match status" value="1"/>
</dbReference>
<sequence>MYSTECTILLIEIIFYFLAAIILYDMLHKMANSPLLCIAVLTVTLAVTSKCYAQNYGINVPITGSMDVAVPNKTDDQIGLSSTLCIYYPKEAATQMNDAEWKSTVTQLLLAKGWPTTSVYLNEYADLQSFSNDPQLNCDYNIILAKYDQNETLDMSELAELLLYEWLCNPMDVTLYYYQQTSESNKWIAMGSDCTIKVCPLNTQTLGIGCKTTDVSTFEELTTTEKLAIIDVVDGVNHKANYTISTCTIKNCIRLDPRENVAIIQVGGPEIIDISEDPMVVPHVQRATRINWKKWWQIFYTVVDYINTIIQAMSKRSRSLNTSAYYFRV</sequence>
<keyword id="KW-0106">Calcium</keyword>
<keyword id="KW-0167">Capsid protein</keyword>
<keyword id="KW-1015">Disulfide bond</keyword>
<keyword id="KW-0325">Glycoprotein</keyword>
<keyword id="KW-1038">Host endoplasmic reticulum</keyword>
<keyword id="KW-0945">Host-virus interaction</keyword>
<keyword id="KW-0479">Metal-binding</keyword>
<keyword id="KW-1152">Outer capsid protein</keyword>
<keyword id="KW-0732">Signal</keyword>
<keyword id="KW-1146">T=13 icosahedral capsid protein</keyword>
<keyword id="KW-0946">Virion</keyword>
<organismHost>
    <name type="scientific">Aves</name>
    <dbReference type="NCBI Taxonomy" id="8782"/>
</organismHost>
<feature type="signal peptide" evidence="2">
    <location>
        <begin position="1"/>
        <end position="53"/>
    </location>
</feature>
<feature type="chain" id="PRO_0000149589" description="Outer capsid glycoprotein VP7" evidence="2">
    <location>
        <begin position="54"/>
        <end position="329"/>
    </location>
</feature>
<feature type="region of interest" description="CNP motif; interaction with ITGAV/ITGB3" evidence="2">
    <location>
        <begin position="168"/>
        <end position="170"/>
    </location>
</feature>
<feature type="binding site" evidence="2">
    <location>
        <position position="98"/>
    </location>
    <ligand>
        <name>Ca(2+)</name>
        <dbReference type="ChEBI" id="CHEBI:29108"/>
        <label>1</label>
    </ligand>
</feature>
<feature type="binding site" evidence="2">
    <location>
        <position position="180"/>
    </location>
    <ligand>
        <name>Ca(2+)</name>
        <dbReference type="ChEBI" id="CHEBI:29108"/>
        <label>2</label>
    </ligand>
</feature>
<feature type="binding site" evidence="2">
    <location>
        <position position="209"/>
    </location>
    <ligand>
        <name>Ca(2+)</name>
        <dbReference type="ChEBI" id="CHEBI:29108"/>
        <label>1</label>
    </ligand>
</feature>
<feature type="binding site" evidence="2">
    <location>
        <position position="217"/>
    </location>
    <ligand>
        <name>Ca(2+)</name>
        <dbReference type="ChEBI" id="CHEBI:29108"/>
        <label>1</label>
    </ligand>
</feature>
<feature type="binding site" evidence="2">
    <location>
        <position position="219"/>
    </location>
    <ligand>
        <name>Ca(2+)</name>
        <dbReference type="ChEBI" id="CHEBI:29108"/>
        <label>1</label>
    </ligand>
</feature>
<feature type="binding site" evidence="2">
    <location>
        <position position="231"/>
    </location>
    <ligand>
        <name>Ca(2+)</name>
        <dbReference type="ChEBI" id="CHEBI:29108"/>
        <label>2</label>
    </ligand>
</feature>
<feature type="binding site" evidence="2">
    <location>
        <position position="232"/>
    </location>
    <ligand>
        <name>Ca(2+)</name>
        <dbReference type="ChEBI" id="CHEBI:29108"/>
        <label>2</label>
    </ligand>
</feature>
<feature type="binding site" evidence="2">
    <location>
        <position position="234"/>
    </location>
    <ligand>
        <name>Ca(2+)</name>
        <dbReference type="ChEBI" id="CHEBI:29108"/>
        <label>2</label>
    </ligand>
</feature>
<feature type="binding site" evidence="2">
    <location>
        <position position="304"/>
    </location>
    <ligand>
        <name>Ca(2+)</name>
        <dbReference type="ChEBI" id="CHEBI:29108"/>
        <label>2</label>
    </ligand>
</feature>
<feature type="glycosylation site" description="N-linked (GlcNAc...) asparagine; by host" evidence="1">
    <location>
        <position position="72"/>
    </location>
</feature>
<feature type="glycosylation site" description="N-linked (GlcNAc...) asparagine; by host" evidence="1">
    <location>
        <position position="150"/>
    </location>
</feature>
<feature type="glycosylation site" description="N-linked (GlcNAc...) asparagine; by host" evidence="1">
    <location>
        <position position="241"/>
    </location>
</feature>
<feature type="glycosylation site" description="N-linked (GlcNAc...) asparagine; by host" evidence="1">
    <location>
        <position position="321"/>
    </location>
</feature>
<feature type="disulfide bond" evidence="2">
    <location>
        <begin position="85"/>
        <end position="138"/>
    </location>
</feature>
<feature type="disulfide bond" evidence="2">
    <location>
        <begin position="168"/>
        <end position="252"/>
    </location>
</feature>
<feature type="disulfide bond" evidence="2">
    <location>
        <begin position="194"/>
        <end position="247"/>
    </location>
</feature>
<feature type="disulfide bond" evidence="2">
    <location>
        <begin position="199"/>
        <end position="210"/>
    </location>
</feature>
<evidence type="ECO:0000255" key="1"/>
<evidence type="ECO:0000255" key="2">
    <source>
        <dbReference type="HAMAP-Rule" id="MF_04131"/>
    </source>
</evidence>
<name>VP7_ROTA1</name>
<proteinExistence type="evidence at transcript level"/>
<accession>P36357</accession>
<comment type="function">
    <text evidence="2">Calcium-binding protein that interacts with rotavirus cell receptors once the initial attachment by VP4 has been achieved. Rotavirus attachment and entry into the host cell probably involves multiple sequential contacts between the outer capsid proteins VP4 and VP7, and the cell receptors. Following entry into the host cell, low intracellular or intravesicular Ca(2+) concentration probably causes the calcium-stabilized VP7 trimers to dissociate from the virion. This step is probably necessary for the membrane-disrupting entry step and the release of VP4, which is locked onto the virion by VP7.</text>
</comment>
<comment type="subunit">
    <text evidence="2">Homotrimer; disulfide-linked. 2 Ca(2+) ions bound at each subunit interface in the trimer hold the trimer together. Interacts with the intermediate capsid protein VP6. Interacts with the outer capsid protein VP5*.</text>
</comment>
<comment type="subcellular location">
    <subcellularLocation>
        <location evidence="2">Virion</location>
    </subcellularLocation>
    <subcellularLocation>
        <location evidence="2">Host endoplasmic reticulum lumen</location>
    </subcellularLocation>
    <text evidence="2">The outer layer contains 780 copies of VP7, grouped as 260 trimers. Immature double-layered particles assembled in the cytoplasm bud across the membrane of the endoplasmic reticulum, acquiring during this process a transient lipid membrane that is modified with the ER resident viral glycoproteins NSP4 and VP7; these enveloped particles also contain VP4. As the particles move towards the interior of the ER cisternae, the transient lipid membrane and the non-structural protein NSP4 are lost, while the virus surface proteins VP4 and VP7 rearrange to form the outermost virus protein layer, yielding mature infectious triple-layered particles.</text>
</comment>
<comment type="PTM">
    <text evidence="2">N-glycosylated.</text>
</comment>
<comment type="PTM">
    <text evidence="2">The N-terminus is blocked possibly by pyroglutamic acid.</text>
</comment>
<comment type="miscellaneous">
    <text evidence="2">Some rotavirus strains are neuraminidase-sensitive and require sialic acid to attach to the cell surface. Some rotavirus strains are integrin-dependent. Some rotavirus strains depend on ganglioside for their entry into the host cell. Hsp70 also seems to be involved in the entry of some strains.</text>
</comment>
<comment type="miscellaneous">
    <text evidence="2">In group A rotaviruses, VP7 defines the G serotype.</text>
</comment>
<comment type="similarity">
    <text evidence="2">Belongs to the rotavirus VP7 family.</text>
</comment>
<organism>
    <name type="scientific">Rotavirus A (strain RVA/Turkey/Ireland/Ty-1/1978/G7P[17])</name>
    <name type="common">RV-A</name>
    <dbReference type="NCBI Taxonomy" id="12584"/>
    <lineage>
        <taxon>Viruses</taxon>
        <taxon>Riboviria</taxon>
        <taxon>Orthornavirae</taxon>
        <taxon>Duplornaviricota</taxon>
        <taxon>Resentoviricetes</taxon>
        <taxon>Reovirales</taxon>
        <taxon>Sedoreoviridae</taxon>
        <taxon>Rotavirus</taxon>
        <taxon>Rotavirus A</taxon>
    </lineage>
</organism>
<protein>
    <recommendedName>
        <fullName evidence="2">Outer capsid glycoprotein VP7</fullName>
    </recommendedName>
</protein>
<reference key="1">
    <citation type="journal article" date="1993" name="Arch. Virol.">
        <title>The avian rotavirus Ty-1 Vp7 nucleotide and deduced amino acid sequences differ significantly from those of Ch-2 rotavirus.</title>
        <authorList>
            <person name="Kool D.A."/>
            <person name="Holmes I.H."/>
        </authorList>
    </citation>
    <scope>NUCLEOTIDE SEQUENCE [MRNA]</scope>
</reference>